<name>GLRX1_VACCT</name>
<protein>
    <recommendedName>
        <fullName>Glutaredoxin-1</fullName>
    </recommendedName>
</protein>
<feature type="chain" id="PRO_0000141617" description="Glutaredoxin-1">
    <location>
        <begin position="1"/>
        <end position="108"/>
    </location>
</feature>
<feature type="domain" description="Glutaredoxin" evidence="3">
    <location>
        <begin position="3"/>
        <end position="106"/>
    </location>
</feature>
<feature type="disulfide bond" description="Redox-active" evidence="2">
    <location>
        <begin position="23"/>
        <end position="26"/>
    </location>
</feature>
<gene>
    <name type="primary">OPG075</name>
    <name type="ORF">TO2L</name>
</gene>
<sequence length="108" mass="12355">MAEEFVQQRLANNKVTIFVKYTCPFCRNALDILNKFSFKRGAYEIVDIKEFKPENELRDYFEQITGGRTVPRIFFGKTSIGGYSDLLEIDNMDALGDILSSIGVLRTC</sequence>
<comment type="function">
    <text>Has thioltransferase and dehydroascorbate reductase activities.</text>
</comment>
<comment type="subcellular location">
    <subcellularLocation>
        <location>Virion</location>
    </subcellularLocation>
    <text evidence="1">Localizes to the virion core.</text>
</comment>
<comment type="induction">
    <text evidence="2">Expressed in the intermediate phase of the viral replicative cycle.</text>
</comment>
<comment type="similarity">
    <text evidence="4">Belongs to the glutaredoxin family.</text>
</comment>
<evidence type="ECO:0000250" key="1"/>
<evidence type="ECO:0000250" key="2">
    <source>
        <dbReference type="UniProtKB" id="P68692"/>
    </source>
</evidence>
<evidence type="ECO:0000255" key="3">
    <source>
        <dbReference type="PROSITE-ProRule" id="PRU00686"/>
    </source>
</evidence>
<evidence type="ECO:0000305" key="4"/>
<accession>Q77TL9</accession>
<reference key="1">
    <citation type="submission" date="1998-09" db="EMBL/GenBank/DDBJ databases">
        <title>Complete genomic sequence of vaccinia virus (Tian Tan strain).</title>
        <authorList>
            <person name="Jin Q."/>
            <person name="Hou Y.D."/>
            <person name="Cheng N.H."/>
            <person name="Yao E.M."/>
            <person name="Cheng S.X."/>
            <person name="Yang X.K."/>
            <person name="Jing D.Y."/>
            <person name="Yu W.H."/>
            <person name="Yuan J.S."/>
            <person name="Ma X.J."/>
        </authorList>
    </citation>
    <scope>NUCLEOTIDE SEQUENCE [LARGE SCALE GENOMIC DNA]</scope>
</reference>
<proteinExistence type="inferred from homology"/>
<keyword id="KW-1015">Disulfide bond</keyword>
<keyword id="KW-0249">Electron transport</keyword>
<keyword id="KW-0676">Redox-active center</keyword>
<keyword id="KW-0813">Transport</keyword>
<keyword id="KW-0946">Virion</keyword>
<dbReference type="EMBL" id="AF095689">
    <property type="protein sequence ID" value="AAF33928.1"/>
    <property type="molecule type" value="Genomic_DNA"/>
</dbReference>
<dbReference type="SMR" id="Q77TL9"/>
<dbReference type="Proteomes" id="UP000163220">
    <property type="component" value="Genome"/>
</dbReference>
<dbReference type="GO" id="GO:0044423">
    <property type="term" value="C:virion component"/>
    <property type="evidence" value="ECO:0007669"/>
    <property type="project" value="UniProtKB-KW"/>
</dbReference>
<dbReference type="GO" id="GO:0015038">
    <property type="term" value="F:glutathione disulfide oxidoreductase activity"/>
    <property type="evidence" value="ECO:0007669"/>
    <property type="project" value="TreeGrafter"/>
</dbReference>
<dbReference type="Gene3D" id="3.40.30.10">
    <property type="entry name" value="Glutaredoxin"/>
    <property type="match status" value="1"/>
</dbReference>
<dbReference type="InterPro" id="IPR011767">
    <property type="entry name" value="GLR_AS"/>
</dbReference>
<dbReference type="InterPro" id="IPR047185">
    <property type="entry name" value="GLRX1"/>
</dbReference>
<dbReference type="InterPro" id="IPR002109">
    <property type="entry name" value="Glutaredoxin"/>
</dbReference>
<dbReference type="InterPro" id="IPR011899">
    <property type="entry name" value="Glutaredoxin_euk/vir"/>
</dbReference>
<dbReference type="InterPro" id="IPR014025">
    <property type="entry name" value="Glutaredoxin_subgr"/>
</dbReference>
<dbReference type="InterPro" id="IPR036249">
    <property type="entry name" value="Thioredoxin-like_sf"/>
</dbReference>
<dbReference type="NCBIfam" id="TIGR02180">
    <property type="entry name" value="GRX_euk"/>
    <property type="match status" value="1"/>
</dbReference>
<dbReference type="PANTHER" id="PTHR46185">
    <property type="entry name" value="GLUTAREDOXIN-1"/>
    <property type="match status" value="1"/>
</dbReference>
<dbReference type="PANTHER" id="PTHR46185:SF1">
    <property type="entry name" value="GLUTAREDOXIN-1"/>
    <property type="match status" value="1"/>
</dbReference>
<dbReference type="Pfam" id="PF00462">
    <property type="entry name" value="Glutaredoxin"/>
    <property type="match status" value="1"/>
</dbReference>
<dbReference type="PRINTS" id="PR00160">
    <property type="entry name" value="GLUTAREDOXIN"/>
</dbReference>
<dbReference type="SUPFAM" id="SSF52833">
    <property type="entry name" value="Thioredoxin-like"/>
    <property type="match status" value="1"/>
</dbReference>
<dbReference type="PROSITE" id="PS00195">
    <property type="entry name" value="GLUTAREDOXIN_1"/>
    <property type="match status" value="1"/>
</dbReference>
<dbReference type="PROSITE" id="PS51354">
    <property type="entry name" value="GLUTAREDOXIN_2"/>
    <property type="match status" value="1"/>
</dbReference>
<organismHost>
    <name type="scientific">Homo sapiens</name>
    <name type="common">Human</name>
    <dbReference type="NCBI Taxonomy" id="9606"/>
</organismHost>
<organism>
    <name type="scientific">Vaccinia virus (strain Tian Tan)</name>
    <name type="common">VACV</name>
    <dbReference type="NCBI Taxonomy" id="10253"/>
    <lineage>
        <taxon>Viruses</taxon>
        <taxon>Varidnaviria</taxon>
        <taxon>Bamfordvirae</taxon>
        <taxon>Nucleocytoviricota</taxon>
        <taxon>Pokkesviricetes</taxon>
        <taxon>Chitovirales</taxon>
        <taxon>Poxviridae</taxon>
        <taxon>Chordopoxvirinae</taxon>
        <taxon>Orthopoxvirus</taxon>
        <taxon>Vaccinia virus</taxon>
    </lineage>
</organism>